<name>DEOC_THEP1</name>
<proteinExistence type="inferred from homology"/>
<protein>
    <recommendedName>
        <fullName evidence="1">Deoxyribose-phosphate aldolase</fullName>
        <shortName evidence="1">DERA</shortName>
        <ecNumber evidence="1">4.1.2.4</ecNumber>
    </recommendedName>
    <alternativeName>
        <fullName evidence="1">2-deoxy-D-ribose 5-phosphate aldolase</fullName>
    </alternativeName>
    <alternativeName>
        <fullName evidence="1">Phosphodeoxyriboaldolase</fullName>
        <shortName evidence="1">Deoxyriboaldolase</shortName>
    </alternativeName>
</protein>
<dbReference type="EC" id="4.1.2.4" evidence="1"/>
<dbReference type="EMBL" id="CP000702">
    <property type="protein sequence ID" value="ABQ47247.1"/>
    <property type="molecule type" value="Genomic_DNA"/>
</dbReference>
<dbReference type="RefSeq" id="WP_011943737.1">
    <property type="nucleotide sequence ID" value="NC_009486.1"/>
</dbReference>
<dbReference type="SMR" id="A5IM24"/>
<dbReference type="STRING" id="390874.Tpet_1233"/>
<dbReference type="KEGG" id="tpt:Tpet_1233"/>
<dbReference type="eggNOG" id="COG0274">
    <property type="taxonomic scope" value="Bacteria"/>
</dbReference>
<dbReference type="HOGENOM" id="CLU_053595_0_1_0"/>
<dbReference type="UniPathway" id="UPA00002">
    <property type="reaction ID" value="UER00468"/>
</dbReference>
<dbReference type="Proteomes" id="UP000006558">
    <property type="component" value="Chromosome"/>
</dbReference>
<dbReference type="GO" id="GO:0005737">
    <property type="term" value="C:cytoplasm"/>
    <property type="evidence" value="ECO:0007669"/>
    <property type="project" value="UniProtKB-SubCell"/>
</dbReference>
<dbReference type="GO" id="GO:0004139">
    <property type="term" value="F:deoxyribose-phosphate aldolase activity"/>
    <property type="evidence" value="ECO:0007669"/>
    <property type="project" value="UniProtKB-UniRule"/>
</dbReference>
<dbReference type="GO" id="GO:0006018">
    <property type="term" value="P:2-deoxyribose 1-phosphate catabolic process"/>
    <property type="evidence" value="ECO:0007669"/>
    <property type="project" value="UniProtKB-UniRule"/>
</dbReference>
<dbReference type="GO" id="GO:0016052">
    <property type="term" value="P:carbohydrate catabolic process"/>
    <property type="evidence" value="ECO:0007669"/>
    <property type="project" value="TreeGrafter"/>
</dbReference>
<dbReference type="GO" id="GO:0009264">
    <property type="term" value="P:deoxyribonucleotide catabolic process"/>
    <property type="evidence" value="ECO:0007669"/>
    <property type="project" value="InterPro"/>
</dbReference>
<dbReference type="CDD" id="cd00959">
    <property type="entry name" value="DeoC"/>
    <property type="match status" value="1"/>
</dbReference>
<dbReference type="FunFam" id="3.20.20.70:FF:000198">
    <property type="entry name" value="Deoxyribose-phosphate aldolase"/>
    <property type="match status" value="1"/>
</dbReference>
<dbReference type="Gene3D" id="3.20.20.70">
    <property type="entry name" value="Aldolase class I"/>
    <property type="match status" value="1"/>
</dbReference>
<dbReference type="HAMAP" id="MF_00114">
    <property type="entry name" value="DeoC_type1"/>
    <property type="match status" value="1"/>
</dbReference>
<dbReference type="InterPro" id="IPR013785">
    <property type="entry name" value="Aldolase_TIM"/>
</dbReference>
<dbReference type="InterPro" id="IPR011343">
    <property type="entry name" value="DeoC"/>
</dbReference>
<dbReference type="InterPro" id="IPR002915">
    <property type="entry name" value="DeoC/FbaB/LacD_aldolase"/>
</dbReference>
<dbReference type="InterPro" id="IPR028581">
    <property type="entry name" value="DeoC_typeI"/>
</dbReference>
<dbReference type="NCBIfam" id="TIGR00126">
    <property type="entry name" value="deoC"/>
    <property type="match status" value="1"/>
</dbReference>
<dbReference type="PANTHER" id="PTHR10889">
    <property type="entry name" value="DEOXYRIBOSE-PHOSPHATE ALDOLASE"/>
    <property type="match status" value="1"/>
</dbReference>
<dbReference type="PANTHER" id="PTHR10889:SF1">
    <property type="entry name" value="DEOXYRIBOSE-PHOSPHATE ALDOLASE"/>
    <property type="match status" value="1"/>
</dbReference>
<dbReference type="Pfam" id="PF01791">
    <property type="entry name" value="DeoC"/>
    <property type="match status" value="1"/>
</dbReference>
<dbReference type="PIRSF" id="PIRSF001357">
    <property type="entry name" value="DeoC"/>
    <property type="match status" value="1"/>
</dbReference>
<dbReference type="SMART" id="SM01133">
    <property type="entry name" value="DeoC"/>
    <property type="match status" value="1"/>
</dbReference>
<dbReference type="SUPFAM" id="SSF51569">
    <property type="entry name" value="Aldolase"/>
    <property type="match status" value="1"/>
</dbReference>
<evidence type="ECO:0000255" key="1">
    <source>
        <dbReference type="HAMAP-Rule" id="MF_00114"/>
    </source>
</evidence>
<sequence length="248" mass="27369">MIEYRIEEAIARYREYYEFKPARESAGIEDVRSAIEHTNLKPFATPDDIKKLCLEARENRFYGVCVNPCYVKLAREELEGTDVKVVTVVGFPLGANETRTKAHEAIFAVESGADEIDMVINVGMLKAKEWEYVYEDIRSVVESVKGKVVKVIIETCYLDTEEKIAACVISKLAGAHFVKTSTGFGTGGATAEDVHLMKWIVGDEMGVKASGGIRTFEDAVKMIMYGADRIGTSSGVKIVQGGEERYGG</sequence>
<comment type="function">
    <text evidence="1">Catalyzes a reversible aldol reaction between acetaldehyde and D-glyceraldehyde 3-phosphate to generate 2-deoxy-D-ribose 5-phosphate.</text>
</comment>
<comment type="catalytic activity">
    <reaction evidence="1">
        <text>2-deoxy-D-ribose 5-phosphate = D-glyceraldehyde 3-phosphate + acetaldehyde</text>
        <dbReference type="Rhea" id="RHEA:12821"/>
        <dbReference type="ChEBI" id="CHEBI:15343"/>
        <dbReference type="ChEBI" id="CHEBI:59776"/>
        <dbReference type="ChEBI" id="CHEBI:62877"/>
        <dbReference type="EC" id="4.1.2.4"/>
    </reaction>
</comment>
<comment type="pathway">
    <text evidence="1">Carbohydrate degradation; 2-deoxy-D-ribose 1-phosphate degradation; D-glyceraldehyde 3-phosphate and acetaldehyde from 2-deoxy-alpha-D-ribose 1-phosphate: step 2/2.</text>
</comment>
<comment type="subcellular location">
    <subcellularLocation>
        <location evidence="1">Cytoplasm</location>
    </subcellularLocation>
</comment>
<comment type="similarity">
    <text evidence="1">Belongs to the DeoC/FbaB aldolase family. DeoC type 1 subfamily.</text>
</comment>
<gene>
    <name evidence="1" type="primary">deoC</name>
    <name type="ordered locus">Tpet_1233</name>
</gene>
<accession>A5IM24</accession>
<reference key="1">
    <citation type="submission" date="2007-05" db="EMBL/GenBank/DDBJ databases">
        <title>Complete sequence of Thermotoga petrophila RKU-1.</title>
        <authorList>
            <consortium name="US DOE Joint Genome Institute"/>
            <person name="Copeland A."/>
            <person name="Lucas S."/>
            <person name="Lapidus A."/>
            <person name="Barry K."/>
            <person name="Glavina del Rio T."/>
            <person name="Dalin E."/>
            <person name="Tice H."/>
            <person name="Pitluck S."/>
            <person name="Sims D."/>
            <person name="Brettin T."/>
            <person name="Bruce D."/>
            <person name="Detter J.C."/>
            <person name="Han C."/>
            <person name="Tapia R."/>
            <person name="Schmutz J."/>
            <person name="Larimer F."/>
            <person name="Land M."/>
            <person name="Hauser L."/>
            <person name="Kyrpides N."/>
            <person name="Mikhailova N."/>
            <person name="Nelson K."/>
            <person name="Gogarten J.P."/>
            <person name="Noll K."/>
            <person name="Richardson P."/>
        </authorList>
    </citation>
    <scope>NUCLEOTIDE SEQUENCE [LARGE SCALE GENOMIC DNA]</scope>
    <source>
        <strain>ATCC BAA-488 / DSM 13995 / JCM 10881 / RKU-1</strain>
    </source>
</reference>
<organism>
    <name type="scientific">Thermotoga petrophila (strain ATCC BAA-488 / DSM 13995 / JCM 10881 / RKU-1)</name>
    <dbReference type="NCBI Taxonomy" id="390874"/>
    <lineage>
        <taxon>Bacteria</taxon>
        <taxon>Thermotogati</taxon>
        <taxon>Thermotogota</taxon>
        <taxon>Thermotogae</taxon>
        <taxon>Thermotogales</taxon>
        <taxon>Thermotogaceae</taxon>
        <taxon>Thermotoga</taxon>
    </lineage>
</organism>
<keyword id="KW-0963">Cytoplasm</keyword>
<keyword id="KW-0456">Lyase</keyword>
<keyword id="KW-0704">Schiff base</keyword>
<feature type="chain" id="PRO_1000015339" description="Deoxyribose-phosphate aldolase">
    <location>
        <begin position="1"/>
        <end position="248"/>
    </location>
</feature>
<feature type="active site" description="Proton donor/acceptor" evidence="1">
    <location>
        <position position="117"/>
    </location>
</feature>
<feature type="active site" description="Schiff-base intermediate with acetaldehyde" evidence="1">
    <location>
        <position position="179"/>
    </location>
</feature>
<feature type="active site" description="Proton donor/acceptor" evidence="1">
    <location>
        <position position="208"/>
    </location>
</feature>